<evidence type="ECO:0000255" key="1">
    <source>
        <dbReference type="HAMAP-Rule" id="MF_01174"/>
    </source>
</evidence>
<keyword id="KW-0056">Arginine metabolism</keyword>
<keyword id="KW-0520">NAD</keyword>
<keyword id="KW-0560">Oxidoreductase</keyword>
<gene>
    <name evidence="1" type="primary">astD</name>
    <name type="ordered locus">PFL_4512</name>
</gene>
<sequence length="488" mass="51299">MSTLYIAGQWLAGQGEAFTSVNPVTQAVIWSGNGATAAQVESAVQAARQAFPAWAKRSLEERISVLEAFAASLKSRADELARCIGEETGKPLWEAATEVTSMVNKIAISVQSYRERTGEKSGPLGDATAVLRHKPHGVVAVFGPYNFPGHLPNGHIVPALLAGNSVLFKPSELTPKVAELTVQCWIEAGLPAGVLNLLQGARETGIALAANPGIDGLFFTGSSRTGNHLHQQFAGRPDKILALEMGGNNPLVVEQVADLDAAVYTIIQSAFISAGQRCTCARRLLVPQGAWGDTLLARLVAVSATIEVGAFDQQPAPFMGSVISLGAARALMDAQQQLLANGAVALLEMTQPQAQAALLTPGILDVSAVAERPDEELFGPLLQVIRYADFDDAIAEANNTQYGLAAGLLSDSAERYQQFWLESRAGIVNWNKQLTGAASSAPFGGVGASGNHRASAYYAADYCAYPVASLETPSLVLPSALTPGVRLS</sequence>
<dbReference type="EC" id="1.2.1.71" evidence="1"/>
<dbReference type="EMBL" id="CP000076">
    <property type="protein sequence ID" value="AAY93759.1"/>
    <property type="molecule type" value="Genomic_DNA"/>
</dbReference>
<dbReference type="RefSeq" id="WP_011062768.1">
    <property type="nucleotide sequence ID" value="NC_004129.6"/>
</dbReference>
<dbReference type="SMR" id="Q4K837"/>
<dbReference type="STRING" id="220664.PFL_4512"/>
<dbReference type="KEGG" id="pfl:PFL_4512"/>
<dbReference type="PATRIC" id="fig|220664.5.peg.4613"/>
<dbReference type="eggNOG" id="COG1012">
    <property type="taxonomic scope" value="Bacteria"/>
</dbReference>
<dbReference type="HOGENOM" id="CLU_005391_1_0_6"/>
<dbReference type="UniPathway" id="UPA00185">
    <property type="reaction ID" value="UER00282"/>
</dbReference>
<dbReference type="Proteomes" id="UP000008540">
    <property type="component" value="Chromosome"/>
</dbReference>
<dbReference type="GO" id="GO:0043824">
    <property type="term" value="F:succinylglutamate-semialdehyde dehydrogenase activity"/>
    <property type="evidence" value="ECO:0007669"/>
    <property type="project" value="UniProtKB-EC"/>
</dbReference>
<dbReference type="GO" id="GO:0019544">
    <property type="term" value="P:arginine catabolic process to glutamate"/>
    <property type="evidence" value="ECO:0007669"/>
    <property type="project" value="UniProtKB-UniRule"/>
</dbReference>
<dbReference type="GO" id="GO:0019545">
    <property type="term" value="P:arginine catabolic process to succinate"/>
    <property type="evidence" value="ECO:0007669"/>
    <property type="project" value="UniProtKB-UniRule"/>
</dbReference>
<dbReference type="CDD" id="cd07095">
    <property type="entry name" value="ALDH_SGSD_AstD"/>
    <property type="match status" value="1"/>
</dbReference>
<dbReference type="FunFam" id="3.40.309.10:FF:000013">
    <property type="entry name" value="N-succinylglutamate 5-semialdehyde dehydrogenase"/>
    <property type="match status" value="1"/>
</dbReference>
<dbReference type="FunFam" id="3.40.605.10:FF:000010">
    <property type="entry name" value="N-succinylglutamate 5-semialdehyde dehydrogenase"/>
    <property type="match status" value="1"/>
</dbReference>
<dbReference type="Gene3D" id="3.40.605.10">
    <property type="entry name" value="Aldehyde Dehydrogenase, Chain A, domain 1"/>
    <property type="match status" value="1"/>
</dbReference>
<dbReference type="Gene3D" id="3.40.309.10">
    <property type="entry name" value="Aldehyde Dehydrogenase, Chain A, domain 2"/>
    <property type="match status" value="1"/>
</dbReference>
<dbReference type="HAMAP" id="MF_01174">
    <property type="entry name" value="Aldedh_AstD"/>
    <property type="match status" value="1"/>
</dbReference>
<dbReference type="InterPro" id="IPR016161">
    <property type="entry name" value="Ald_DH/histidinol_DH"/>
</dbReference>
<dbReference type="InterPro" id="IPR016163">
    <property type="entry name" value="Ald_DH_C"/>
</dbReference>
<dbReference type="InterPro" id="IPR016160">
    <property type="entry name" value="Ald_DH_CS_CYS"/>
</dbReference>
<dbReference type="InterPro" id="IPR029510">
    <property type="entry name" value="Ald_DH_CS_GLU"/>
</dbReference>
<dbReference type="InterPro" id="IPR016162">
    <property type="entry name" value="Ald_DH_N"/>
</dbReference>
<dbReference type="InterPro" id="IPR015590">
    <property type="entry name" value="Aldehyde_DH_dom"/>
</dbReference>
<dbReference type="InterPro" id="IPR017649">
    <property type="entry name" value="SuccinylGlu_semiald_DH_AstD"/>
</dbReference>
<dbReference type="NCBIfam" id="TIGR03240">
    <property type="entry name" value="arg_catab_astD"/>
    <property type="match status" value="1"/>
</dbReference>
<dbReference type="NCBIfam" id="NF006992">
    <property type="entry name" value="PRK09457.1"/>
    <property type="match status" value="1"/>
</dbReference>
<dbReference type="PANTHER" id="PTHR11699">
    <property type="entry name" value="ALDEHYDE DEHYDROGENASE-RELATED"/>
    <property type="match status" value="1"/>
</dbReference>
<dbReference type="Pfam" id="PF00171">
    <property type="entry name" value="Aldedh"/>
    <property type="match status" value="1"/>
</dbReference>
<dbReference type="SUPFAM" id="SSF53720">
    <property type="entry name" value="ALDH-like"/>
    <property type="match status" value="1"/>
</dbReference>
<dbReference type="PROSITE" id="PS00070">
    <property type="entry name" value="ALDEHYDE_DEHYDR_CYS"/>
    <property type="match status" value="1"/>
</dbReference>
<dbReference type="PROSITE" id="PS00687">
    <property type="entry name" value="ALDEHYDE_DEHYDR_GLU"/>
    <property type="match status" value="1"/>
</dbReference>
<name>ASTD_PSEF5</name>
<feature type="chain" id="PRO_0000262414" description="N-succinylglutamate 5-semialdehyde dehydrogenase">
    <location>
        <begin position="1"/>
        <end position="488"/>
    </location>
</feature>
<feature type="active site" evidence="1">
    <location>
        <position position="244"/>
    </location>
</feature>
<feature type="active site" evidence="1">
    <location>
        <position position="278"/>
    </location>
</feature>
<feature type="binding site" evidence="1">
    <location>
        <begin position="221"/>
        <end position="226"/>
    </location>
    <ligand>
        <name>NAD(+)</name>
        <dbReference type="ChEBI" id="CHEBI:57540"/>
    </ligand>
</feature>
<comment type="function">
    <text evidence="1">Catalyzes the NAD-dependent reduction of succinylglutamate semialdehyde into succinylglutamate.</text>
</comment>
<comment type="catalytic activity">
    <reaction evidence="1">
        <text>N-succinyl-L-glutamate 5-semialdehyde + NAD(+) + H2O = N-succinyl-L-glutamate + NADH + 2 H(+)</text>
        <dbReference type="Rhea" id="RHEA:10812"/>
        <dbReference type="ChEBI" id="CHEBI:15377"/>
        <dbReference type="ChEBI" id="CHEBI:15378"/>
        <dbReference type="ChEBI" id="CHEBI:57540"/>
        <dbReference type="ChEBI" id="CHEBI:57945"/>
        <dbReference type="ChEBI" id="CHEBI:58520"/>
        <dbReference type="ChEBI" id="CHEBI:58763"/>
        <dbReference type="EC" id="1.2.1.71"/>
    </reaction>
</comment>
<comment type="pathway">
    <text evidence="1">Amino-acid degradation; L-arginine degradation via AST pathway; L-glutamate and succinate from L-arginine: step 4/5.</text>
</comment>
<comment type="similarity">
    <text evidence="1">Belongs to the aldehyde dehydrogenase family. AstD subfamily.</text>
</comment>
<proteinExistence type="inferred from homology"/>
<accession>Q4K837</accession>
<reference key="1">
    <citation type="journal article" date="2005" name="Nat. Biotechnol.">
        <title>Complete genome sequence of the plant commensal Pseudomonas fluorescens Pf-5.</title>
        <authorList>
            <person name="Paulsen I.T."/>
            <person name="Press C.M."/>
            <person name="Ravel J."/>
            <person name="Kobayashi D.Y."/>
            <person name="Myers G.S.A."/>
            <person name="Mavrodi D.V."/>
            <person name="DeBoy R.T."/>
            <person name="Seshadri R."/>
            <person name="Ren Q."/>
            <person name="Madupu R."/>
            <person name="Dodson R.J."/>
            <person name="Durkin A.S."/>
            <person name="Brinkac L.M."/>
            <person name="Daugherty S.C."/>
            <person name="Sullivan S.A."/>
            <person name="Rosovitz M.J."/>
            <person name="Gwinn M.L."/>
            <person name="Zhou L."/>
            <person name="Schneider D.J."/>
            <person name="Cartinhour S.W."/>
            <person name="Nelson W.C."/>
            <person name="Weidman J."/>
            <person name="Watkins K."/>
            <person name="Tran K."/>
            <person name="Khouri H."/>
            <person name="Pierson E.A."/>
            <person name="Pierson L.S. III"/>
            <person name="Thomashow L.S."/>
            <person name="Loper J.E."/>
        </authorList>
    </citation>
    <scope>NUCLEOTIDE SEQUENCE [LARGE SCALE GENOMIC DNA]</scope>
    <source>
        <strain>ATCC BAA-477 / NRRL B-23932 / Pf-5</strain>
    </source>
</reference>
<organism>
    <name type="scientific">Pseudomonas fluorescens (strain ATCC BAA-477 / NRRL B-23932 / Pf-5)</name>
    <dbReference type="NCBI Taxonomy" id="220664"/>
    <lineage>
        <taxon>Bacteria</taxon>
        <taxon>Pseudomonadati</taxon>
        <taxon>Pseudomonadota</taxon>
        <taxon>Gammaproteobacteria</taxon>
        <taxon>Pseudomonadales</taxon>
        <taxon>Pseudomonadaceae</taxon>
        <taxon>Pseudomonas</taxon>
    </lineage>
</organism>
<protein>
    <recommendedName>
        <fullName evidence="1">N-succinylglutamate 5-semialdehyde dehydrogenase</fullName>
        <ecNumber evidence="1">1.2.1.71</ecNumber>
    </recommendedName>
    <alternativeName>
        <fullName evidence="1">Succinylglutamic semialdehyde dehydrogenase</fullName>
        <shortName evidence="1">SGSD</shortName>
    </alternativeName>
</protein>